<feature type="chain" id="PRO_0000448559" description="Minovincinine 19-hydroxy-O-acetyltransferase">
    <location>
        <begin position="1"/>
        <end position="443"/>
    </location>
</feature>
<feature type="coiled-coil region" evidence="2">
    <location>
        <begin position="316"/>
        <end position="343"/>
    </location>
</feature>
<feature type="short sequence motif" description="Nuclear localization signal" evidence="3">
    <location>
        <begin position="215"/>
        <end position="222"/>
    </location>
</feature>
<feature type="active site" description="Proton acceptor" evidence="2">
    <location>
        <position position="157"/>
    </location>
</feature>
<feature type="active site" description="Proton acceptor" evidence="2">
    <location>
        <position position="384"/>
    </location>
</feature>
<gene>
    <name evidence="7 8" type="primary">MAT</name>
</gene>
<organism>
    <name type="scientific">Catharanthus roseus</name>
    <name type="common">Madagascar periwinkle</name>
    <name type="synonym">Vinca rosea</name>
    <dbReference type="NCBI Taxonomy" id="4058"/>
    <lineage>
        <taxon>Eukaryota</taxon>
        <taxon>Viridiplantae</taxon>
        <taxon>Streptophyta</taxon>
        <taxon>Embryophyta</taxon>
        <taxon>Tracheophyta</taxon>
        <taxon>Spermatophyta</taxon>
        <taxon>Magnoliopsida</taxon>
        <taxon>eudicotyledons</taxon>
        <taxon>Gunneridae</taxon>
        <taxon>Pentapetalae</taxon>
        <taxon>asterids</taxon>
        <taxon>lamiids</taxon>
        <taxon>Gentianales</taxon>
        <taxon>Apocynaceae</taxon>
        <taxon>Rauvolfioideae</taxon>
        <taxon>Vinceae</taxon>
        <taxon>Catharanthinae</taxon>
        <taxon>Catharanthus</taxon>
    </lineage>
</organism>
<evidence type="ECO:0000250" key="1">
    <source>
        <dbReference type="UniProtKB" id="Q9ZTK5"/>
    </source>
</evidence>
<evidence type="ECO:0000255" key="2"/>
<evidence type="ECO:0000255" key="3">
    <source>
        <dbReference type="PROSITE-ProRule" id="PRU00768"/>
    </source>
</evidence>
<evidence type="ECO:0000269" key="4">
    <source>
    </source>
</evidence>
<evidence type="ECO:0000269" key="5">
    <source>
    </source>
</evidence>
<evidence type="ECO:0000269" key="6">
    <source>
    </source>
</evidence>
<evidence type="ECO:0000303" key="7">
    <source>
    </source>
</evidence>
<evidence type="ECO:0000303" key="8">
    <source>
    </source>
</evidence>
<evidence type="ECO:0000305" key="9"/>
<sequence length="443" mass="49878">MDSITMVETETLSKTLIKPSSPTPQSLSHYNLSYNDQNIYPEYIFAGFFYSNPDGHEISTIREQLQNSLSKTLVSYYPFAGKVVKNDYIHCNDDGIEFVDVRIHCRMNDILKPELRSYASELIRPNRSTVGSEDSTALVQLSHFDCGGVAVAFGISHKVADAATILSFIKDWAASTCDLSSSHDVSTPVLVSDSIFPRQDNIICGQFPASPNCVRKRFLFSPEAIERLKSKAIEFGIEKPTRVEVLTAFLCRCATVAGKSAAKNNNCGQSLPFAVIQAVNLRPLLELPKNSVGNLISIYFSTIKENDTVNIEQEFTKLVIGELRKAKDKLKNLSQEKLNYVARMQDFANCLKELDISSFFDMENVDIDAYLFSSWCRFPFYDIDFGLGKPIWVCMFQPHFKNCIILMDYPFGDDYGIEALITLEQEKMPAFENNELLLSFASN</sequence>
<proteinExistence type="evidence at protein level"/>
<dbReference type="EC" id="2.3.1.-" evidence="4 6"/>
<dbReference type="EMBL" id="AF253415">
    <property type="protein sequence ID" value="AAO13736.1"/>
    <property type="molecule type" value="Genomic_DNA"/>
</dbReference>
<dbReference type="SMR" id="Q8GZU0"/>
<dbReference type="KEGG" id="ag:AAO13736"/>
<dbReference type="OrthoDB" id="1932220at2759"/>
<dbReference type="SABIO-RK" id="Q8GZU0"/>
<dbReference type="GO" id="GO:0005737">
    <property type="term" value="C:cytoplasm"/>
    <property type="evidence" value="ECO:0000314"/>
    <property type="project" value="UniProtKB"/>
</dbReference>
<dbReference type="GO" id="GO:0005634">
    <property type="term" value="C:nucleus"/>
    <property type="evidence" value="ECO:0000314"/>
    <property type="project" value="UniProtKB"/>
</dbReference>
<dbReference type="GO" id="GO:0016413">
    <property type="term" value="F:O-acetyltransferase activity"/>
    <property type="evidence" value="ECO:0000314"/>
    <property type="project" value="UniProtKB"/>
</dbReference>
<dbReference type="GO" id="GO:0035835">
    <property type="term" value="P:indole alkaloid biosynthetic process"/>
    <property type="evidence" value="ECO:0000314"/>
    <property type="project" value="UniProtKB"/>
</dbReference>
<dbReference type="GO" id="GO:0009753">
    <property type="term" value="P:response to jasmonic acid"/>
    <property type="evidence" value="ECO:0000270"/>
    <property type="project" value="UniProtKB"/>
</dbReference>
<dbReference type="Gene3D" id="3.30.559.10">
    <property type="entry name" value="Chloramphenicol acetyltransferase-like domain"/>
    <property type="match status" value="2"/>
</dbReference>
<dbReference type="InterPro" id="IPR023213">
    <property type="entry name" value="CAT-like_dom_sf"/>
</dbReference>
<dbReference type="PANTHER" id="PTHR31623:SF118">
    <property type="entry name" value="BAHD ACYLTRANSFERASE"/>
    <property type="match status" value="1"/>
</dbReference>
<dbReference type="PANTHER" id="PTHR31623">
    <property type="entry name" value="F21J9.9"/>
    <property type="match status" value="1"/>
</dbReference>
<dbReference type="Pfam" id="PF02458">
    <property type="entry name" value="Transferase"/>
    <property type="match status" value="1"/>
</dbReference>
<name>MAT_CATRO</name>
<comment type="function">
    <text evidence="4 5 6">Component of the monoterpenoid indole alkaloids (MIAs, e.g. echitovenine, tabersonine, lochnericine, 19-hydroxytabersonine and horhammericine) biosynthetic pathway; MIAs are used in cancer treatment and other medical applications (PubMed:31009114). Acyltransferase catalyzing the conversion of (+)-minovincinine to (+)-echitovenine (PubMed:11154328, PubMed:29438577, PubMed:31009114).</text>
</comment>
<comment type="catalytic activity">
    <reaction evidence="4 5 6">
        <text>(+)-minovincinine + acetyl-CoA = (+)-echitovenine + CoA</text>
        <dbReference type="Rhea" id="RHEA:61080"/>
        <dbReference type="ChEBI" id="CHEBI:57287"/>
        <dbReference type="ChEBI" id="CHEBI:57288"/>
        <dbReference type="ChEBI" id="CHEBI:144371"/>
        <dbReference type="ChEBI" id="CHEBI:144379"/>
    </reaction>
    <physiologicalReaction direction="left-to-right" evidence="4 6">
        <dbReference type="Rhea" id="RHEA:61081"/>
    </physiologicalReaction>
</comment>
<comment type="biophysicochemical properties">
    <kinetics>
        <KM evidence="5">6 uM for acetyl-CoA (at pH 7.6 and 30 degrees Celsius)</KM>
        <KM evidence="5">28 uM for (-)-minovincinine (at pH 7.6 and 30 degrees Celsius)</KM>
        <KM evidence="5">21 uM for horhammericine (at pH 7.6 and 30 degrees Celsius)</KM>
        <KM evidence="5">40 uM for 19-hydroxytabersonine (at pH 7.6 and 30 degrees Celsius)</KM>
        <KM evidence="4">3 uM for acetyl-CoA (at pH 7.6 and 37 degrees Celsius)</KM>
        <KM evidence="4">250 uM for deactylvindoline (at pH 7.6 and 37 degrees Celsius)</KM>
        <KM evidence="4">120 uM for horhammericine (at pH 7.6 and 37 degrees Celsius)</KM>
        <Vmax evidence="5">0.014 umol/sec/ug enzyme toward acetyl-CoA (at pH 7.6 and 30 degrees Celsius)</Vmax>
        <Vmax evidence="5">0.001 umol/sec/ug enzyme with (-)-minovincinine as substrate (at pH 7.6 and 30 degrees Celsius)</Vmax>
        <Vmax evidence="5">1.0E-4 umol/sec/ug enzyme with horhammericine as substrate (at pH 7.6 and 30 degrees Celsius)</Vmax>
        <Vmax evidence="5">0.25 umol/sec/ug enzyme with 19-hydroxytabersonine as substrate (at pH 7.6 and 30 degrees Celsius)</Vmax>
        <Vmax evidence="4">25.0 pmol/sec/mg enzyme with acetyl-CoA as substrate (at pH 7.6 and 37 degrees Celsius)</Vmax>
        <Vmax evidence="4">31.0 pmol/sec/mg enzyme with deactylvindoline as substrate (at pH 7.6 and 37 degrees Celsius)</Vmax>
        <Vmax evidence="4">10.0 pmol/sec/mg enzyme with horhammericine as substrate (at pH 7.6 and 37 degrees Celsius)</Vmax>
    </kinetics>
</comment>
<comment type="pathway">
    <text evidence="6">Alkaloid biosynthesis.</text>
</comment>
<comment type="subunit">
    <text evidence="1">Monomer.</text>
</comment>
<comment type="subcellular location">
    <subcellularLocation>
        <location evidence="5">Cytoplasm</location>
    </subcellularLocation>
    <subcellularLocation>
        <location evidence="3 5">Nucleus</location>
    </subcellularLocation>
</comment>
<comment type="tissue specificity">
    <text evidence="4 5">Expressed in cortical cells of the root tip, especially in hairy roots, as well as in etiolated seedlings (PubMed:11154328). Mostly expressed in roots, and, at lower levels, in leaves (PubMed:29438577).</text>
</comment>
<comment type="induction">
    <text evidence="5">Induced by jasmonic acid (MeJA).</text>
</comment>
<comment type="similarity">
    <text evidence="9">Belongs to the plant acyltransferase family.</text>
</comment>
<reference key="1">
    <citation type="journal article" date="2001" name="Plant Physiol.">
        <title>Molecular and biochemical analysis of a Madagascar periwinkle root-specific minovincinine-19-hydroxy-O-acetyltransferase.</title>
        <authorList>
            <person name="Laflamme P."/>
            <person name="St-Pierre B."/>
            <person name="De Luca V."/>
        </authorList>
    </citation>
    <scope>NUCLEOTIDE SEQUENCE [GENOMIC DNA]</scope>
    <scope>FUNCTION</scope>
    <scope>CATALYTIC ACTIVITY</scope>
    <scope>TISSUE SPECIFICITY</scope>
    <scope>BIOPHYSICOCHEMICAL PROPERTIES</scope>
</reference>
<reference key="2">
    <citation type="journal article" date="2018" name="Plant J.">
        <title>A BAHD acyltransferase catalyzing 19-O-acetylation of tabersonine derivatives in roots of Catharanthus roseus enables combinatorial synthesis of monoterpene indole alkaloids.</title>
        <authorList>
            <person name="Carqueijeiro I."/>
            <person name="Duge de Bernonville T."/>
            <person name="Lanoue A."/>
            <person name="Dang T.-T."/>
            <person name="Teijaro C.N."/>
            <person name="Paetz C."/>
            <person name="Billet K."/>
            <person name="Mosquera A."/>
            <person name="Oudin A."/>
            <person name="Besseau S."/>
            <person name="Papon N."/>
            <person name="Glevarec G."/>
            <person name="Atehortua L."/>
            <person name="Clastre M."/>
            <person name="Giglioli-Guivarc'h N."/>
            <person name="Schneider B."/>
            <person name="St-Pierre B."/>
            <person name="Andrade R.B."/>
            <person name="O'Connor S.E."/>
            <person name="Courdavault V."/>
        </authorList>
    </citation>
    <scope>FUNCTION</scope>
    <scope>CATALYTIC ACTIVITY</scope>
    <scope>INDUCTION BY JASMONIC ACID</scope>
    <scope>SUBCELLULAR LOCATION</scope>
    <scope>BIOPHYSICOCHEMICAL PROPERTIES</scope>
    <scope>TISSUE SPECIFICITY</scope>
</reference>
<reference key="3">
    <citation type="journal article" date="2019" name="Plant J.">
        <title>The assembly of (+)-vincadifformine- and (-)-tabersonine-derived monoterpenoid indole alkaloids in Catharanthus roseus involves separate branch pathways.</title>
        <authorList>
            <person name="Williams D."/>
            <person name="Qu Y."/>
            <person name="Simionescu R."/>
            <person name="De Luca V."/>
        </authorList>
    </citation>
    <scope>FUNCTION</scope>
    <scope>CATALYTIC ACTIVITY</scope>
    <scope>PATHWAY</scope>
</reference>
<accession>Q8GZU0</accession>
<protein>
    <recommendedName>
        <fullName evidence="7 8">Minovincinine 19-hydroxy-O-acetyltransferase</fullName>
        <ecNumber evidence="4 6">2.3.1.-</ecNumber>
    </recommendedName>
</protein>
<keyword id="KW-0012">Acyltransferase</keyword>
<keyword id="KW-0017">Alkaloid metabolism</keyword>
<keyword id="KW-0175">Coiled coil</keyword>
<keyword id="KW-0963">Cytoplasm</keyword>
<keyword id="KW-0539">Nucleus</keyword>
<keyword id="KW-0808">Transferase</keyword>